<feature type="chain" id="PRO_1000184624" description="Glutathione-regulated potassium-efflux system ancillary protein KefG">
    <location>
        <begin position="1"/>
        <end position="184"/>
    </location>
</feature>
<protein>
    <recommendedName>
        <fullName evidence="1">Glutathione-regulated potassium-efflux system ancillary protein KefG</fullName>
    </recommendedName>
    <alternativeName>
        <fullName evidence="1">Putative quinone oxidoreductase KefG</fullName>
        <ecNumber evidence="1">1.6.5.2</ecNumber>
    </alternativeName>
</protein>
<reference key="1">
    <citation type="journal article" date="2009" name="PLoS Genet.">
        <title>Organised genome dynamics in the Escherichia coli species results in highly diverse adaptive paths.</title>
        <authorList>
            <person name="Touchon M."/>
            <person name="Hoede C."/>
            <person name="Tenaillon O."/>
            <person name="Barbe V."/>
            <person name="Baeriswyl S."/>
            <person name="Bidet P."/>
            <person name="Bingen E."/>
            <person name="Bonacorsi S."/>
            <person name="Bouchier C."/>
            <person name="Bouvet O."/>
            <person name="Calteau A."/>
            <person name="Chiapello H."/>
            <person name="Clermont O."/>
            <person name="Cruveiller S."/>
            <person name="Danchin A."/>
            <person name="Diard M."/>
            <person name="Dossat C."/>
            <person name="Karoui M.E."/>
            <person name="Frapy E."/>
            <person name="Garry L."/>
            <person name="Ghigo J.M."/>
            <person name="Gilles A.M."/>
            <person name="Johnson J."/>
            <person name="Le Bouguenec C."/>
            <person name="Lescat M."/>
            <person name="Mangenot S."/>
            <person name="Martinez-Jehanne V."/>
            <person name="Matic I."/>
            <person name="Nassif X."/>
            <person name="Oztas S."/>
            <person name="Petit M.A."/>
            <person name="Pichon C."/>
            <person name="Rouy Z."/>
            <person name="Ruf C.S."/>
            <person name="Schneider D."/>
            <person name="Tourret J."/>
            <person name="Vacherie B."/>
            <person name="Vallenet D."/>
            <person name="Medigue C."/>
            <person name="Rocha E.P.C."/>
            <person name="Denamur E."/>
        </authorList>
    </citation>
    <scope>NUCLEOTIDE SEQUENCE [LARGE SCALE GENOMIC DNA]</scope>
    <source>
        <strain>55989 / EAEC</strain>
    </source>
</reference>
<sequence>MMSQPAKVLLLYAHPESQDSVANRVLLKPATQLSNVTVHDLYAHYPDFFIDIPREQALLREHEVIVFQHPLYTYSCPALLKEWLDRVLSRGFASGPGGNQLAGKYWRSVITTGEPESAYRYDALNRYPMSDVLRPFELAAGMCRMHWLSPIIIYWARRQSAQELASHARAYGDWLANPLSPGGR</sequence>
<organism>
    <name type="scientific">Escherichia coli (strain 55989 / EAEC)</name>
    <dbReference type="NCBI Taxonomy" id="585055"/>
    <lineage>
        <taxon>Bacteria</taxon>
        <taxon>Pseudomonadati</taxon>
        <taxon>Pseudomonadota</taxon>
        <taxon>Gammaproteobacteria</taxon>
        <taxon>Enterobacterales</taxon>
        <taxon>Enterobacteriaceae</taxon>
        <taxon>Escherichia</taxon>
    </lineage>
</organism>
<keyword id="KW-0997">Cell inner membrane</keyword>
<keyword id="KW-1003">Cell membrane</keyword>
<keyword id="KW-0472">Membrane</keyword>
<keyword id="KW-0520">NAD</keyword>
<keyword id="KW-0560">Oxidoreductase</keyword>
<keyword id="KW-1185">Reference proteome</keyword>
<evidence type="ECO:0000255" key="1">
    <source>
        <dbReference type="HAMAP-Rule" id="MF_01415"/>
    </source>
</evidence>
<name>KEFG_ECO55</name>
<comment type="function">
    <text evidence="1">Regulatory subunit of a potassium efflux system that confers protection against electrophiles. Required for full activity of KefB.</text>
</comment>
<comment type="catalytic activity">
    <reaction evidence="1">
        <text>a quinone + NADH + H(+) = a quinol + NAD(+)</text>
        <dbReference type="Rhea" id="RHEA:46160"/>
        <dbReference type="ChEBI" id="CHEBI:15378"/>
        <dbReference type="ChEBI" id="CHEBI:24646"/>
        <dbReference type="ChEBI" id="CHEBI:57540"/>
        <dbReference type="ChEBI" id="CHEBI:57945"/>
        <dbReference type="ChEBI" id="CHEBI:132124"/>
        <dbReference type="EC" id="1.6.5.2"/>
    </reaction>
</comment>
<comment type="catalytic activity">
    <reaction evidence="1">
        <text>a quinone + NADPH + H(+) = a quinol + NADP(+)</text>
        <dbReference type="Rhea" id="RHEA:46164"/>
        <dbReference type="ChEBI" id="CHEBI:15378"/>
        <dbReference type="ChEBI" id="CHEBI:24646"/>
        <dbReference type="ChEBI" id="CHEBI:57783"/>
        <dbReference type="ChEBI" id="CHEBI:58349"/>
        <dbReference type="ChEBI" id="CHEBI:132124"/>
        <dbReference type="EC" id="1.6.5.2"/>
    </reaction>
</comment>
<comment type="subunit">
    <text evidence="1">Interacts with KefB.</text>
</comment>
<comment type="subcellular location">
    <subcellularLocation>
        <location evidence="1">Cell inner membrane</location>
        <topology evidence="1">Peripheral membrane protein</topology>
        <orientation evidence="1">Cytoplasmic side</orientation>
    </subcellularLocation>
</comment>
<comment type="similarity">
    <text evidence="1">Belongs to the NAD(P)H dehydrogenase (quinone) family. KefG subfamily.</text>
</comment>
<accession>B7L4M8</accession>
<dbReference type="EC" id="1.6.5.2" evidence="1"/>
<dbReference type="EMBL" id="CU928145">
    <property type="protein sequence ID" value="CAV00072.1"/>
    <property type="molecule type" value="Genomic_DNA"/>
</dbReference>
<dbReference type="SMR" id="B7L4M8"/>
<dbReference type="KEGG" id="eck:EC55989_3755"/>
<dbReference type="HOGENOM" id="CLU_058643_0_1_6"/>
<dbReference type="Proteomes" id="UP000000746">
    <property type="component" value="Chromosome"/>
</dbReference>
<dbReference type="GO" id="GO:0005886">
    <property type="term" value="C:plasma membrane"/>
    <property type="evidence" value="ECO:0007669"/>
    <property type="project" value="UniProtKB-SubCell"/>
</dbReference>
<dbReference type="GO" id="GO:0009055">
    <property type="term" value="F:electron transfer activity"/>
    <property type="evidence" value="ECO:0007669"/>
    <property type="project" value="TreeGrafter"/>
</dbReference>
<dbReference type="GO" id="GO:0010181">
    <property type="term" value="F:FMN binding"/>
    <property type="evidence" value="ECO:0007669"/>
    <property type="project" value="TreeGrafter"/>
</dbReference>
<dbReference type="GO" id="GO:0050136">
    <property type="term" value="F:NADH:ubiquinone reductase (non-electrogenic) activity"/>
    <property type="evidence" value="ECO:0007669"/>
    <property type="project" value="RHEA"/>
</dbReference>
<dbReference type="GO" id="GO:0008753">
    <property type="term" value="F:NADPH dehydrogenase (quinone) activity"/>
    <property type="evidence" value="ECO:0007669"/>
    <property type="project" value="RHEA"/>
</dbReference>
<dbReference type="GO" id="GO:1901381">
    <property type="term" value="P:positive regulation of potassium ion transmembrane transport"/>
    <property type="evidence" value="ECO:0007669"/>
    <property type="project" value="UniProtKB-UniRule"/>
</dbReference>
<dbReference type="GO" id="GO:0006813">
    <property type="term" value="P:potassium ion transport"/>
    <property type="evidence" value="ECO:0007669"/>
    <property type="project" value="InterPro"/>
</dbReference>
<dbReference type="FunFam" id="3.40.50.360:FF:000013">
    <property type="entry name" value="Glutathione-regulated potassium-efflux system ancillary protein KefG"/>
    <property type="match status" value="1"/>
</dbReference>
<dbReference type="Gene3D" id="3.40.50.360">
    <property type="match status" value="1"/>
</dbReference>
<dbReference type="HAMAP" id="MF_01415">
    <property type="entry name" value="K_H_efflux_KefG"/>
    <property type="match status" value="1"/>
</dbReference>
<dbReference type="InterPro" id="IPR003680">
    <property type="entry name" value="Flavodoxin_fold"/>
</dbReference>
<dbReference type="InterPro" id="IPR029039">
    <property type="entry name" value="Flavoprotein-like_sf"/>
</dbReference>
<dbReference type="InterPro" id="IPR023947">
    <property type="entry name" value="K_H_efflux_KefG"/>
</dbReference>
<dbReference type="InterPro" id="IPR046980">
    <property type="entry name" value="KefG/KefF"/>
</dbReference>
<dbReference type="NCBIfam" id="NF003430">
    <property type="entry name" value="PRK04930.1"/>
    <property type="match status" value="1"/>
</dbReference>
<dbReference type="PANTHER" id="PTHR47307">
    <property type="entry name" value="GLUTATHIONE-REGULATED POTASSIUM-EFFLUX SYSTEM ANCILLARY PROTEIN KEFG"/>
    <property type="match status" value="1"/>
</dbReference>
<dbReference type="PANTHER" id="PTHR47307:SF1">
    <property type="entry name" value="GLUTATHIONE-REGULATED POTASSIUM-EFFLUX SYSTEM ANCILLARY PROTEIN KEFG"/>
    <property type="match status" value="1"/>
</dbReference>
<dbReference type="Pfam" id="PF02525">
    <property type="entry name" value="Flavodoxin_2"/>
    <property type="match status" value="1"/>
</dbReference>
<dbReference type="SUPFAM" id="SSF52218">
    <property type="entry name" value="Flavoproteins"/>
    <property type="match status" value="1"/>
</dbReference>
<gene>
    <name evidence="1" type="primary">kefG</name>
    <name type="ordered locus">EC55989_3755</name>
</gene>
<proteinExistence type="inferred from homology"/>